<gene>
    <name evidence="1" type="primary">pstB</name>
    <name type="ordered locus">MMOB0100</name>
</gene>
<keyword id="KW-0067">ATP-binding</keyword>
<keyword id="KW-1003">Cell membrane</keyword>
<keyword id="KW-0472">Membrane</keyword>
<keyword id="KW-0547">Nucleotide-binding</keyword>
<keyword id="KW-0592">Phosphate transport</keyword>
<keyword id="KW-1185">Reference proteome</keyword>
<keyword id="KW-1278">Translocase</keyword>
<keyword id="KW-0813">Transport</keyword>
<sequence length="281" mass="31899">MFKFFKNKQDNKKIERKIEFKEKLNSLEENVVFKIENLSLWYKKGEKQALKNVSANIAKNHVTALIGPSGCGKSTFLRELNRMNDTIEGVLTDGNIFFEGKNIKSKKLPVTFLRTRVGMVFQKPTPFPISIYDNIAYGPRSNGIHNKKVLDKIVENALKSAALWEEVKNNLKDLGTSLSGGQQQRLCIARAIAIEPHVLLMDEPTSALDPIATAKVEELILKLKDRYSIVIVTHSMSQAQRISDDTLFFYAGEIVEANKTKEIFLRPQLKRTRDYINGRIG</sequence>
<name>PSTB_MYCM1</name>
<organism>
    <name type="scientific">Mycoplasma mobile (strain ATCC 43663 / 163K / NCTC 11711)</name>
    <name type="common">Mesomycoplasma mobile</name>
    <dbReference type="NCBI Taxonomy" id="267748"/>
    <lineage>
        <taxon>Bacteria</taxon>
        <taxon>Bacillati</taxon>
        <taxon>Mycoplasmatota</taxon>
        <taxon>Mycoplasmoidales</taxon>
        <taxon>Metamycoplasmataceae</taxon>
        <taxon>Mesomycoplasma</taxon>
    </lineage>
</organism>
<protein>
    <recommendedName>
        <fullName evidence="1">Phosphate import ATP-binding protein PstB</fullName>
        <ecNumber evidence="1">7.3.2.1</ecNumber>
    </recommendedName>
    <alternativeName>
        <fullName evidence="1">ABC phosphate transporter</fullName>
    </alternativeName>
    <alternativeName>
        <fullName evidence="1">Phosphate-transporting ATPase</fullName>
    </alternativeName>
</protein>
<evidence type="ECO:0000255" key="1">
    <source>
        <dbReference type="HAMAP-Rule" id="MF_01702"/>
    </source>
</evidence>
<feature type="chain" id="PRO_0000092843" description="Phosphate import ATP-binding protein PstB">
    <location>
        <begin position="1"/>
        <end position="281"/>
    </location>
</feature>
<feature type="domain" description="ABC transporter" evidence="1">
    <location>
        <begin position="33"/>
        <end position="276"/>
    </location>
</feature>
<feature type="binding site" evidence="1">
    <location>
        <begin position="67"/>
        <end position="74"/>
    </location>
    <ligand>
        <name>ATP</name>
        <dbReference type="ChEBI" id="CHEBI:30616"/>
    </ligand>
</feature>
<proteinExistence type="inferred from homology"/>
<comment type="function">
    <text evidence="1">Part of the ABC transporter complex PstSACB involved in phosphate import. Responsible for energy coupling to the transport system.</text>
</comment>
<comment type="catalytic activity">
    <reaction evidence="1">
        <text>phosphate(out) + ATP + H2O = ADP + 2 phosphate(in) + H(+)</text>
        <dbReference type="Rhea" id="RHEA:24440"/>
        <dbReference type="ChEBI" id="CHEBI:15377"/>
        <dbReference type="ChEBI" id="CHEBI:15378"/>
        <dbReference type="ChEBI" id="CHEBI:30616"/>
        <dbReference type="ChEBI" id="CHEBI:43474"/>
        <dbReference type="ChEBI" id="CHEBI:456216"/>
        <dbReference type="EC" id="7.3.2.1"/>
    </reaction>
</comment>
<comment type="subunit">
    <text evidence="1">The complex is composed of two ATP-binding proteins (PstB), two transmembrane proteins (PstC and PstA) and a solute-binding protein (PstS).</text>
</comment>
<comment type="subcellular location">
    <subcellularLocation>
        <location evidence="1">Cell membrane</location>
        <topology evidence="1">Peripheral membrane protein</topology>
    </subcellularLocation>
</comment>
<comment type="similarity">
    <text evidence="1">Belongs to the ABC transporter superfamily. Phosphate importer (TC 3.A.1.7) family.</text>
</comment>
<accession>Q6KIS8</accession>
<reference key="1">
    <citation type="journal article" date="2004" name="Genome Res.">
        <title>The complete genome and proteome of Mycoplasma mobile.</title>
        <authorList>
            <person name="Jaffe J.D."/>
            <person name="Stange-Thomann N."/>
            <person name="Smith C."/>
            <person name="DeCaprio D."/>
            <person name="Fisher S."/>
            <person name="Butler J."/>
            <person name="Calvo S."/>
            <person name="Elkins T."/>
            <person name="FitzGerald M.G."/>
            <person name="Hafez N."/>
            <person name="Kodira C.D."/>
            <person name="Major J."/>
            <person name="Wang S."/>
            <person name="Wilkinson J."/>
            <person name="Nicol R."/>
            <person name="Nusbaum C."/>
            <person name="Birren B."/>
            <person name="Berg H.C."/>
            <person name="Church G.M."/>
        </authorList>
    </citation>
    <scope>NUCLEOTIDE SEQUENCE [LARGE SCALE GENOMIC DNA]</scope>
    <source>
        <strain>ATCC 43663 / NCTC 11711 / 163 K</strain>
    </source>
</reference>
<dbReference type="EC" id="7.3.2.1" evidence="1"/>
<dbReference type="EMBL" id="AE017308">
    <property type="protein sequence ID" value="AAT27496.1"/>
    <property type="molecule type" value="Genomic_DNA"/>
</dbReference>
<dbReference type="RefSeq" id="WP_011264530.1">
    <property type="nucleotide sequence ID" value="NC_006908.1"/>
</dbReference>
<dbReference type="SMR" id="Q6KIS8"/>
<dbReference type="STRING" id="267748.MMOB0100"/>
<dbReference type="KEGG" id="mmo:MMOB0100"/>
<dbReference type="eggNOG" id="COG1117">
    <property type="taxonomic scope" value="Bacteria"/>
</dbReference>
<dbReference type="HOGENOM" id="CLU_000604_1_22_14"/>
<dbReference type="Proteomes" id="UP000009072">
    <property type="component" value="Chromosome"/>
</dbReference>
<dbReference type="GO" id="GO:0005886">
    <property type="term" value="C:plasma membrane"/>
    <property type="evidence" value="ECO:0007669"/>
    <property type="project" value="UniProtKB-SubCell"/>
</dbReference>
<dbReference type="GO" id="GO:0005524">
    <property type="term" value="F:ATP binding"/>
    <property type="evidence" value="ECO:0007669"/>
    <property type="project" value="UniProtKB-KW"/>
</dbReference>
<dbReference type="GO" id="GO:0016887">
    <property type="term" value="F:ATP hydrolysis activity"/>
    <property type="evidence" value="ECO:0007669"/>
    <property type="project" value="InterPro"/>
</dbReference>
<dbReference type="GO" id="GO:0015415">
    <property type="term" value="F:ATPase-coupled phosphate ion transmembrane transporter activity"/>
    <property type="evidence" value="ECO:0007669"/>
    <property type="project" value="UniProtKB-EC"/>
</dbReference>
<dbReference type="GO" id="GO:0035435">
    <property type="term" value="P:phosphate ion transmembrane transport"/>
    <property type="evidence" value="ECO:0007669"/>
    <property type="project" value="InterPro"/>
</dbReference>
<dbReference type="CDD" id="cd03260">
    <property type="entry name" value="ABC_PstB_phosphate_transporter"/>
    <property type="match status" value="1"/>
</dbReference>
<dbReference type="Gene3D" id="3.40.50.300">
    <property type="entry name" value="P-loop containing nucleotide triphosphate hydrolases"/>
    <property type="match status" value="1"/>
</dbReference>
<dbReference type="InterPro" id="IPR003593">
    <property type="entry name" value="AAA+_ATPase"/>
</dbReference>
<dbReference type="InterPro" id="IPR003439">
    <property type="entry name" value="ABC_transporter-like_ATP-bd"/>
</dbReference>
<dbReference type="InterPro" id="IPR017871">
    <property type="entry name" value="ABC_transporter-like_CS"/>
</dbReference>
<dbReference type="InterPro" id="IPR027417">
    <property type="entry name" value="P-loop_NTPase"/>
</dbReference>
<dbReference type="InterPro" id="IPR005670">
    <property type="entry name" value="PstB-like"/>
</dbReference>
<dbReference type="NCBIfam" id="TIGR00972">
    <property type="entry name" value="3a0107s01c2"/>
    <property type="match status" value="1"/>
</dbReference>
<dbReference type="PANTHER" id="PTHR43423">
    <property type="entry name" value="ABC TRANSPORTER I FAMILY MEMBER 17"/>
    <property type="match status" value="1"/>
</dbReference>
<dbReference type="PANTHER" id="PTHR43423:SF1">
    <property type="entry name" value="ABC TRANSPORTER I FAMILY MEMBER 17"/>
    <property type="match status" value="1"/>
</dbReference>
<dbReference type="Pfam" id="PF00005">
    <property type="entry name" value="ABC_tran"/>
    <property type="match status" value="1"/>
</dbReference>
<dbReference type="SMART" id="SM00382">
    <property type="entry name" value="AAA"/>
    <property type="match status" value="1"/>
</dbReference>
<dbReference type="SUPFAM" id="SSF52540">
    <property type="entry name" value="P-loop containing nucleoside triphosphate hydrolases"/>
    <property type="match status" value="1"/>
</dbReference>
<dbReference type="PROSITE" id="PS00211">
    <property type="entry name" value="ABC_TRANSPORTER_1"/>
    <property type="match status" value="1"/>
</dbReference>
<dbReference type="PROSITE" id="PS50893">
    <property type="entry name" value="ABC_TRANSPORTER_2"/>
    <property type="match status" value="1"/>
</dbReference>
<dbReference type="PROSITE" id="PS51238">
    <property type="entry name" value="PSTB"/>
    <property type="match status" value="1"/>
</dbReference>